<dbReference type="EC" id="1.14.-.-" evidence="4"/>
<dbReference type="EMBL" id="AL591982">
    <property type="protein sequence ID" value="CAD00291.1"/>
    <property type="molecule type" value="Genomic_DNA"/>
</dbReference>
<dbReference type="PIR" id="AE1351">
    <property type="entry name" value="AE1351"/>
</dbReference>
<dbReference type="RefSeq" id="NP_465737.1">
    <property type="nucleotide sequence ID" value="NC_003210.1"/>
</dbReference>
<dbReference type="RefSeq" id="WP_009930965.1">
    <property type="nucleotide sequence ID" value="NZ_CP149495.1"/>
</dbReference>
<dbReference type="PDB" id="4KIA">
    <property type="method" value="X-ray"/>
    <property type="resolution" value="1.75 A"/>
    <property type="chains" value="A=1-167"/>
</dbReference>
<dbReference type="PDBsum" id="4KIA"/>
<dbReference type="SMR" id="Q8Y563"/>
<dbReference type="STRING" id="169963.gene:17594904"/>
<dbReference type="PaxDb" id="169963-lmo2213"/>
<dbReference type="EnsemblBacteria" id="CAD00291">
    <property type="protein sequence ID" value="CAD00291"/>
    <property type="gene ID" value="CAD00291"/>
</dbReference>
<dbReference type="GeneID" id="984794"/>
<dbReference type="KEGG" id="lmo:lmo2213"/>
<dbReference type="PATRIC" id="fig|169963.11.peg.2265"/>
<dbReference type="eggNOG" id="COG2329">
    <property type="taxonomic scope" value="Bacteria"/>
</dbReference>
<dbReference type="HOGENOM" id="CLU_116220_1_0_9"/>
<dbReference type="OrthoDB" id="2352283at2"/>
<dbReference type="PhylomeDB" id="Q8Y563"/>
<dbReference type="BioCyc" id="LMON169963:LMO2213-MONOMER"/>
<dbReference type="EvolutionaryTrace" id="Q8Y563"/>
<dbReference type="Proteomes" id="UP000000817">
    <property type="component" value="Chromosome"/>
</dbReference>
<dbReference type="GO" id="GO:0005737">
    <property type="term" value="C:cytoplasm"/>
    <property type="evidence" value="ECO:0007669"/>
    <property type="project" value="UniProtKB-SubCell"/>
</dbReference>
<dbReference type="GO" id="GO:0046872">
    <property type="term" value="F:metal ion binding"/>
    <property type="evidence" value="ECO:0007669"/>
    <property type="project" value="UniProtKB-KW"/>
</dbReference>
<dbReference type="GO" id="GO:0004497">
    <property type="term" value="F:monooxygenase activity"/>
    <property type="evidence" value="ECO:0007669"/>
    <property type="project" value="UniProtKB-KW"/>
</dbReference>
<dbReference type="Gene3D" id="3.30.70.100">
    <property type="match status" value="1"/>
</dbReference>
<dbReference type="InterPro" id="IPR007138">
    <property type="entry name" value="ABM_dom"/>
</dbReference>
<dbReference type="InterPro" id="IPR011008">
    <property type="entry name" value="Dimeric_a/b-barrel"/>
</dbReference>
<dbReference type="SUPFAM" id="SSF54909">
    <property type="entry name" value="Dimeric alpha+beta barrel"/>
    <property type="match status" value="1"/>
</dbReference>
<dbReference type="PROSITE" id="PS51725">
    <property type="entry name" value="ABM"/>
    <property type="match status" value="1"/>
</dbReference>
<keyword id="KW-0002">3D-structure</keyword>
<keyword id="KW-0963">Cytoplasm</keyword>
<keyword id="KW-0349">Heme</keyword>
<keyword id="KW-0408">Iron</keyword>
<keyword id="KW-0479">Metal-binding</keyword>
<keyword id="KW-0503">Monooxygenase</keyword>
<keyword id="KW-0560">Oxidoreductase</keyword>
<keyword id="KW-1185">Reference proteome</keyword>
<accession>Q8Y563</accession>
<protein>
    <recommendedName>
        <fullName evidence="5">Heme-degrading monooxygenase</fullName>
        <ecNumber evidence="4">1.14.-.-</ecNumber>
    </recommendedName>
    <alternativeName>
        <fullName evidence="6">Heme oxygenase</fullName>
    </alternativeName>
    <alternativeName>
        <fullName evidence="5">IsdG-type heme-degradation enzyme</fullName>
        <shortName evidence="5">Isd-LmHde</shortName>
    </alternativeName>
</protein>
<gene>
    <name evidence="8" type="ordered locus">lmo2213</name>
</gene>
<comment type="function">
    <text evidence="4 6">Catalyzes the degradation of heme to biliverdin in the presence of a suitable electron donor such as ascorbate, with the subsequent release of iron. Hardly any CO is released by the heme degradation reaction. Binds heme (PubMed:24598731). Allows bacterial pathogens to use the host heme as an iron source. Release of iron from heme may play a crucial role in the pathogenicity of L.monocytogenes (Probable).</text>
</comment>
<comment type="subunit">
    <text evidence="4">Monomer.</text>
</comment>
<comment type="subcellular location">
    <subcellularLocation>
        <location evidence="1">Cytoplasm</location>
    </subcellularLocation>
</comment>
<comment type="similarity">
    <text evidence="6">Belongs to the antibiotic biosynthesis monooxygenase family.</text>
</comment>
<feature type="chain" id="PRO_0000452171" description="Heme-degrading monooxygenase">
    <location>
        <begin position="1"/>
        <end position="167"/>
    </location>
</feature>
<feature type="domain" description="ABM" evidence="3 7">
    <location>
        <begin position="67"/>
        <end position="154"/>
    </location>
</feature>
<feature type="region of interest" description="Important for catalysis" evidence="4">
    <location>
        <begin position="1"/>
        <end position="50"/>
    </location>
</feature>
<feature type="site" description="Transition state stabilizer" evidence="2">
    <location>
        <position position="129"/>
    </location>
</feature>
<feature type="mutagenesis site" description="No effect in heme-binding activity. 67.9% reduction of heme-degrading activity compared to wild-type. Homodimerizes." evidence="4">
    <location>
        <begin position="1"/>
        <end position="50"/>
    </location>
</feature>
<feature type="mutagenesis site" description="No effect in heme-degrading activity." evidence="4">
    <original>Y</original>
    <variation>A</variation>
    <location>
        <position position="53"/>
    </location>
</feature>
<feature type="mutagenesis site" description="36.2% reduction of heme-degrading activity compared to wild-type." evidence="4">
    <original>E</original>
    <variation>A</variation>
    <location>
        <position position="71"/>
    </location>
</feature>
<feature type="mutagenesis site" description="No effect in heme-binding activity. 28.9% reduction of heme-degrading activity compared to wild-type." evidence="4">
    <original>I</original>
    <variation>R</variation>
    <location>
        <position position="73"/>
    </location>
</feature>
<feature type="mutagenesis site" description="No effect in heme-binding activity. 37.0% reduction of heme-degrading activity compared to wild-type." evidence="4">
    <original>Y</original>
    <variation>A</variation>
    <location>
        <position position="87"/>
    </location>
</feature>
<feature type="mutagenesis site" description="No effect in heme-binding activity. 24.8% reduction of heme-degrading activity compared to wild-type." evidence="4">
    <original>F</original>
    <variation>R</variation>
    <location>
        <position position="126"/>
    </location>
</feature>
<feature type="mutagenesis site" description="61.9% reduction of heme-degrading activity compared to wild-type." evidence="4">
    <original>W</original>
    <variation>A</variation>
    <location>
        <position position="129"/>
    </location>
</feature>
<feature type="mutagenesis site" description="No effect in heme-binding activity. 64.6% reduction of heme-degrading activity compared to wild-type." evidence="4">
    <original>W</original>
    <variation>R</variation>
    <location>
        <position position="129"/>
    </location>
</feature>
<feature type="mutagenesis site" description="21.9% reduction of heme-degrading activity compared to wild-type." evidence="4">
    <original>S</original>
    <variation>A</variation>
    <location>
        <position position="135"/>
    </location>
</feature>
<feature type="mutagenesis site" description="25.5% reduction of heme-degrading activity compared to wild-type." evidence="4">
    <original>T</original>
    <variation>A</variation>
    <location>
        <position position="139"/>
    </location>
</feature>
<feature type="mutagenesis site" description="24.8% reduction of heme-degrading activity compared to wild-type." evidence="4">
    <original>M</original>
    <variation>A</variation>
    <location>
        <position position="142"/>
    </location>
</feature>
<feature type="strand" evidence="11">
    <location>
        <begin position="3"/>
        <end position="9"/>
    </location>
</feature>
<feature type="helix" evidence="11">
    <location>
        <begin position="11"/>
        <end position="18"/>
    </location>
</feature>
<feature type="strand" evidence="11">
    <location>
        <begin position="27"/>
        <end position="30"/>
    </location>
</feature>
<feature type="strand" evidence="11">
    <location>
        <begin position="35"/>
        <end position="41"/>
    </location>
</feature>
<feature type="strand" evidence="11">
    <location>
        <begin position="51"/>
        <end position="60"/>
    </location>
</feature>
<feature type="strand" evidence="11">
    <location>
        <begin position="66"/>
        <end position="74"/>
    </location>
</feature>
<feature type="helix" evidence="11">
    <location>
        <begin position="79"/>
        <end position="91"/>
    </location>
</feature>
<feature type="helix" evidence="11">
    <location>
        <begin position="92"/>
        <end position="96"/>
    </location>
</feature>
<feature type="strand" evidence="11">
    <location>
        <begin position="100"/>
        <end position="121"/>
    </location>
</feature>
<feature type="helix" evidence="11">
    <location>
        <begin position="123"/>
        <end position="129"/>
    </location>
</feature>
<feature type="helix" evidence="11">
    <location>
        <begin position="133"/>
        <end position="143"/>
    </location>
</feature>
<feature type="helix" evidence="11">
    <location>
        <begin position="147"/>
        <end position="149"/>
    </location>
</feature>
<feature type="strand" evidence="11">
    <location>
        <begin position="153"/>
        <end position="158"/>
    </location>
</feature>
<evidence type="ECO:0000250" key="1">
    <source>
        <dbReference type="UniProtKB" id="Q2FZE2"/>
    </source>
</evidence>
<evidence type="ECO:0000255" key="2"/>
<evidence type="ECO:0000255" key="3">
    <source>
        <dbReference type="PROSITE-ProRule" id="PRU01062"/>
    </source>
</evidence>
<evidence type="ECO:0000269" key="4">
    <source>
    </source>
</evidence>
<evidence type="ECO:0000303" key="5">
    <source>
    </source>
</evidence>
<evidence type="ECO:0000305" key="6"/>
<evidence type="ECO:0000305" key="7">
    <source>
    </source>
</evidence>
<evidence type="ECO:0000312" key="8">
    <source>
        <dbReference type="EMBL" id="CAD00291.1"/>
    </source>
</evidence>
<evidence type="ECO:0000312" key="9">
    <source>
        <dbReference type="Proteomes" id="UP000000817"/>
    </source>
</evidence>
<evidence type="ECO:0007744" key="10">
    <source>
        <dbReference type="PDB" id="4KIA"/>
    </source>
</evidence>
<evidence type="ECO:0007829" key="11">
    <source>
        <dbReference type="PDB" id="4KIA"/>
    </source>
</evidence>
<name>HMO_LISMO</name>
<proteinExistence type="evidence at protein level"/>
<reference evidence="8 9" key="1">
    <citation type="journal article" date="2001" name="Science">
        <title>Comparative genomics of Listeria species.</title>
        <authorList>
            <person name="Glaser P."/>
            <person name="Frangeul L."/>
            <person name="Buchrieser C."/>
            <person name="Rusniok C."/>
            <person name="Amend A."/>
            <person name="Baquero F."/>
            <person name="Berche P."/>
            <person name="Bloecker H."/>
            <person name="Brandt P."/>
            <person name="Chakraborty T."/>
            <person name="Charbit A."/>
            <person name="Chetouani F."/>
            <person name="Couve E."/>
            <person name="de Daruvar A."/>
            <person name="Dehoux P."/>
            <person name="Domann E."/>
            <person name="Dominguez-Bernal G."/>
            <person name="Duchaud E."/>
            <person name="Durant L."/>
            <person name="Dussurget O."/>
            <person name="Entian K.-D."/>
            <person name="Fsihi H."/>
            <person name="Garcia-del Portillo F."/>
            <person name="Garrido P."/>
            <person name="Gautier L."/>
            <person name="Goebel W."/>
            <person name="Gomez-Lopez N."/>
            <person name="Hain T."/>
            <person name="Hauf J."/>
            <person name="Jackson D."/>
            <person name="Jones L.-M."/>
            <person name="Kaerst U."/>
            <person name="Kreft J."/>
            <person name="Kuhn M."/>
            <person name="Kunst F."/>
            <person name="Kurapkat G."/>
            <person name="Madueno E."/>
            <person name="Maitournam A."/>
            <person name="Mata Vicente J."/>
            <person name="Ng E."/>
            <person name="Nedjari H."/>
            <person name="Nordsiek G."/>
            <person name="Novella S."/>
            <person name="de Pablos B."/>
            <person name="Perez-Diaz J.-C."/>
            <person name="Purcell R."/>
            <person name="Remmel B."/>
            <person name="Rose M."/>
            <person name="Schlueter T."/>
            <person name="Simoes N."/>
            <person name="Tierrez A."/>
            <person name="Vazquez-Boland J.-A."/>
            <person name="Voss H."/>
            <person name="Wehland J."/>
            <person name="Cossart P."/>
        </authorList>
    </citation>
    <scope>NUCLEOTIDE SEQUENCE [LARGE SCALE GENOMIC DNA]</scope>
    <source>
        <strain evidence="9">ATCC BAA-679 / EGD-e</strain>
    </source>
</reference>
<reference evidence="10" key="2">
    <citation type="journal article" date="2014" name="Acta Crystallogr. D">
        <title>Structural and functional characterization of an Isd-type haem-degradation enzyme from Listeria monocytogenes.</title>
        <authorList>
            <person name="Duong T."/>
            <person name="Park K.S."/>
            <person name="Kim T."/>
            <person name="Kang S.W."/>
            <person name="Hahn M.J."/>
            <person name="Hwang H.-Y."/>
            <person name="Kim K.K."/>
        </authorList>
    </citation>
    <scope>X-RAY CRYSTALLOGRAPHY (1.75 ANGSTROMS)</scope>
    <scope>FUNCTION</scope>
    <scope>CATALYTIC ACTIVITY</scope>
    <scope>HEME-BINDING</scope>
    <scope>SUBUNIT</scope>
    <scope>REGION</scope>
    <scope>MUTAGENESIS OF 1-MET--GLY-50; TYR-53; GLU-71; ILE-73; TYR-87; PHE-126; TRP-129; SER-135; THR-139 AND MET-142</scope>
    <scope>CIRCULAR DICHROISM ANALYSIS</scope>
</reference>
<organism evidence="8">
    <name type="scientific">Listeria monocytogenes serovar 1/2a (strain ATCC BAA-679 / EGD-e)</name>
    <dbReference type="NCBI Taxonomy" id="169963"/>
    <lineage>
        <taxon>Bacteria</taxon>
        <taxon>Bacillati</taxon>
        <taxon>Bacillota</taxon>
        <taxon>Bacilli</taxon>
        <taxon>Bacillales</taxon>
        <taxon>Listeriaceae</taxon>
        <taxon>Listeria</taxon>
    </lineage>
</organism>
<sequence length="167" mass="19466">MKKVFITTGTEHYLRQLMANYTGGNVTLLQNFSQSLLYQESTGEKLFQEGAEYRVLQSSGSIKGFGVVVFEYIHLRDEEIPIFLQMYQRASLHFSETPGLQSTKLTKAMNMNKFLIISFWDSEVFFHDWKKSPLSKEITNIMRKNNTQSGFSHEDIYHYPEFSHDAK</sequence>